<proteinExistence type="evidence at protein level"/>
<feature type="chain" id="PRO_0000079715" description="44 kDa cell wall protein 2">
    <location>
        <begin position="1"/>
        <end position="20" status="greater than"/>
    </location>
</feature>
<feature type="non-terminal residue" evidence="2">
    <location>
        <position position="20"/>
    </location>
</feature>
<keyword id="KW-0134">Cell wall</keyword>
<keyword id="KW-0903">Direct protein sequencing</keyword>
<keyword id="KW-1185">Reference proteome</keyword>
<keyword id="KW-0964">Secreted</keyword>
<reference evidence="3" key="1">
    <citation type="journal article" date="1997" name="J. Biol. Chem.">
        <title>Differential extraction and protein sequencing reveals major differences in patterns of primary cell wall proteins from plants.</title>
        <authorList>
            <person name="Robertson D."/>
            <person name="Mitchell G.P."/>
            <person name="Gilroy J.S."/>
            <person name="Gerrish C."/>
            <person name="Bolwell G.P."/>
            <person name="Slabas A.R."/>
        </authorList>
    </citation>
    <scope>PROTEIN SEQUENCE</scope>
    <scope>SUBCELLULAR LOCATION</scope>
</reference>
<comment type="subcellular location">
    <subcellularLocation>
        <location evidence="1">Secreted</location>
        <location evidence="1">Cell wall</location>
    </subcellularLocation>
</comment>
<protein>
    <recommendedName>
        <fullName>44 kDa cell wall protein 2</fullName>
    </recommendedName>
</protein>
<name>CWP29_SOLLC</name>
<accession>P80825</accession>
<sequence>VAGKSFVPIALGRQSKQTPF</sequence>
<evidence type="ECO:0000269" key="1">
    <source>
    </source>
</evidence>
<evidence type="ECO:0000303" key="2">
    <source>
    </source>
</evidence>
<evidence type="ECO:0000305" key="3"/>
<organism>
    <name type="scientific">Solanum lycopersicum</name>
    <name type="common">Tomato</name>
    <name type="synonym">Lycopersicon esculentum</name>
    <dbReference type="NCBI Taxonomy" id="4081"/>
    <lineage>
        <taxon>Eukaryota</taxon>
        <taxon>Viridiplantae</taxon>
        <taxon>Streptophyta</taxon>
        <taxon>Embryophyta</taxon>
        <taxon>Tracheophyta</taxon>
        <taxon>Spermatophyta</taxon>
        <taxon>Magnoliopsida</taxon>
        <taxon>eudicotyledons</taxon>
        <taxon>Gunneridae</taxon>
        <taxon>Pentapetalae</taxon>
        <taxon>asterids</taxon>
        <taxon>lamiids</taxon>
        <taxon>Solanales</taxon>
        <taxon>Solanaceae</taxon>
        <taxon>Solanoideae</taxon>
        <taxon>Solaneae</taxon>
        <taxon>Solanum</taxon>
        <taxon>Solanum subgen. Lycopersicon</taxon>
    </lineage>
</organism>
<dbReference type="InParanoid" id="P80825"/>
<dbReference type="Proteomes" id="UP000004994">
    <property type="component" value="Unplaced"/>
</dbReference>
<dbReference type="GO" id="GO:0005576">
    <property type="term" value="C:extracellular region"/>
    <property type="evidence" value="ECO:0007669"/>
    <property type="project" value="UniProtKB-KW"/>
</dbReference>